<name>DAPA_LIGS1</name>
<organism>
    <name type="scientific">Ligilactobacillus salivarius (strain UCC118)</name>
    <name type="common">Lactobacillus salivarius</name>
    <dbReference type="NCBI Taxonomy" id="362948"/>
    <lineage>
        <taxon>Bacteria</taxon>
        <taxon>Bacillati</taxon>
        <taxon>Bacillota</taxon>
        <taxon>Bacilli</taxon>
        <taxon>Lactobacillales</taxon>
        <taxon>Lactobacillaceae</taxon>
        <taxon>Ligilactobacillus</taxon>
    </lineage>
</organism>
<protein>
    <recommendedName>
        <fullName evidence="1">4-hydroxy-tetrahydrodipicolinate synthase</fullName>
        <shortName evidence="1">HTPA synthase</shortName>
        <ecNumber evidence="1">4.3.3.7</ecNumber>
    </recommendedName>
</protein>
<gene>
    <name evidence="1" type="primary">dapA</name>
    <name type="ordered locus">LSL_0639</name>
</gene>
<feature type="chain" id="PRO_1000050203" description="4-hydroxy-tetrahydrodipicolinate synthase">
    <location>
        <begin position="1"/>
        <end position="290"/>
    </location>
</feature>
<feature type="active site" description="Proton donor/acceptor" evidence="1">
    <location>
        <position position="137"/>
    </location>
</feature>
<feature type="active site" description="Schiff-base intermediate with substrate" evidence="1">
    <location>
        <position position="165"/>
    </location>
</feature>
<feature type="binding site" evidence="1">
    <location>
        <position position="48"/>
    </location>
    <ligand>
        <name>pyruvate</name>
        <dbReference type="ChEBI" id="CHEBI:15361"/>
    </ligand>
</feature>
<feature type="binding site" evidence="1">
    <location>
        <position position="206"/>
    </location>
    <ligand>
        <name>pyruvate</name>
        <dbReference type="ChEBI" id="CHEBI:15361"/>
    </ligand>
</feature>
<feature type="site" description="Part of a proton relay during catalysis" evidence="1">
    <location>
        <position position="47"/>
    </location>
</feature>
<feature type="site" description="Part of a proton relay during catalysis" evidence="1">
    <location>
        <position position="111"/>
    </location>
</feature>
<reference key="1">
    <citation type="journal article" date="2006" name="Proc. Natl. Acad. Sci. U.S.A.">
        <title>Multireplicon genome architecture of Lactobacillus salivarius.</title>
        <authorList>
            <person name="Claesson M.J."/>
            <person name="Li Y."/>
            <person name="Leahy S."/>
            <person name="Canchaya C."/>
            <person name="van Pijkeren J.P."/>
            <person name="Cerdeno-Tarraga A.M."/>
            <person name="Parkhill J."/>
            <person name="Flynn S."/>
            <person name="O'Sullivan G.C."/>
            <person name="Collins J.K."/>
            <person name="Higgins D."/>
            <person name="Shanahan F."/>
            <person name="Fitzgerald G.F."/>
            <person name="van Sinderen D."/>
            <person name="O'Toole P.W."/>
        </authorList>
    </citation>
    <scope>NUCLEOTIDE SEQUENCE [LARGE SCALE GENOMIC DNA]</scope>
    <source>
        <strain>UCC118</strain>
    </source>
</reference>
<evidence type="ECO:0000255" key="1">
    <source>
        <dbReference type="HAMAP-Rule" id="MF_00418"/>
    </source>
</evidence>
<evidence type="ECO:0000305" key="2"/>
<dbReference type="EC" id="4.3.3.7" evidence="1"/>
<dbReference type="EMBL" id="CP000233">
    <property type="protein sequence ID" value="ABD99449.1"/>
    <property type="molecule type" value="Genomic_DNA"/>
</dbReference>
<dbReference type="RefSeq" id="WP_003700003.1">
    <property type="nucleotide sequence ID" value="NC_007929.1"/>
</dbReference>
<dbReference type="RefSeq" id="YP_535532.1">
    <property type="nucleotide sequence ID" value="NC_007929.1"/>
</dbReference>
<dbReference type="SMR" id="Q1WU86"/>
<dbReference type="STRING" id="362948.LSL_0639"/>
<dbReference type="GeneID" id="89465431"/>
<dbReference type="KEGG" id="lsl:LSL_0639"/>
<dbReference type="PATRIC" id="fig|362948.14.peg.719"/>
<dbReference type="HOGENOM" id="CLU_049343_7_1_9"/>
<dbReference type="OrthoDB" id="9782828at2"/>
<dbReference type="UniPathway" id="UPA00034">
    <property type="reaction ID" value="UER00017"/>
</dbReference>
<dbReference type="Proteomes" id="UP000006559">
    <property type="component" value="Chromosome"/>
</dbReference>
<dbReference type="GO" id="GO:0005829">
    <property type="term" value="C:cytosol"/>
    <property type="evidence" value="ECO:0007669"/>
    <property type="project" value="TreeGrafter"/>
</dbReference>
<dbReference type="GO" id="GO:0008840">
    <property type="term" value="F:4-hydroxy-tetrahydrodipicolinate synthase activity"/>
    <property type="evidence" value="ECO:0007669"/>
    <property type="project" value="UniProtKB-UniRule"/>
</dbReference>
<dbReference type="GO" id="GO:0019877">
    <property type="term" value="P:diaminopimelate biosynthetic process"/>
    <property type="evidence" value="ECO:0007669"/>
    <property type="project" value="UniProtKB-UniRule"/>
</dbReference>
<dbReference type="GO" id="GO:0009089">
    <property type="term" value="P:lysine biosynthetic process via diaminopimelate"/>
    <property type="evidence" value="ECO:0007669"/>
    <property type="project" value="UniProtKB-UniRule"/>
</dbReference>
<dbReference type="CDD" id="cd00950">
    <property type="entry name" value="DHDPS"/>
    <property type="match status" value="1"/>
</dbReference>
<dbReference type="Gene3D" id="3.20.20.70">
    <property type="entry name" value="Aldolase class I"/>
    <property type="match status" value="1"/>
</dbReference>
<dbReference type="HAMAP" id="MF_00418">
    <property type="entry name" value="DapA"/>
    <property type="match status" value="1"/>
</dbReference>
<dbReference type="InterPro" id="IPR013785">
    <property type="entry name" value="Aldolase_TIM"/>
</dbReference>
<dbReference type="InterPro" id="IPR005263">
    <property type="entry name" value="DapA"/>
</dbReference>
<dbReference type="InterPro" id="IPR002220">
    <property type="entry name" value="DapA-like"/>
</dbReference>
<dbReference type="InterPro" id="IPR020625">
    <property type="entry name" value="Schiff_base-form_aldolases_AS"/>
</dbReference>
<dbReference type="InterPro" id="IPR020624">
    <property type="entry name" value="Schiff_base-form_aldolases_CS"/>
</dbReference>
<dbReference type="NCBIfam" id="TIGR00674">
    <property type="entry name" value="dapA"/>
    <property type="match status" value="1"/>
</dbReference>
<dbReference type="PANTHER" id="PTHR12128:SF66">
    <property type="entry name" value="4-HYDROXY-2-OXOGLUTARATE ALDOLASE, MITOCHONDRIAL"/>
    <property type="match status" value="1"/>
</dbReference>
<dbReference type="PANTHER" id="PTHR12128">
    <property type="entry name" value="DIHYDRODIPICOLINATE SYNTHASE"/>
    <property type="match status" value="1"/>
</dbReference>
<dbReference type="Pfam" id="PF00701">
    <property type="entry name" value="DHDPS"/>
    <property type="match status" value="1"/>
</dbReference>
<dbReference type="PIRSF" id="PIRSF001365">
    <property type="entry name" value="DHDPS"/>
    <property type="match status" value="1"/>
</dbReference>
<dbReference type="PRINTS" id="PR00146">
    <property type="entry name" value="DHPICSNTHASE"/>
</dbReference>
<dbReference type="SMART" id="SM01130">
    <property type="entry name" value="DHDPS"/>
    <property type="match status" value="1"/>
</dbReference>
<dbReference type="SUPFAM" id="SSF51569">
    <property type="entry name" value="Aldolase"/>
    <property type="match status" value="1"/>
</dbReference>
<dbReference type="PROSITE" id="PS00665">
    <property type="entry name" value="DHDPS_1"/>
    <property type="match status" value="1"/>
</dbReference>
<dbReference type="PROSITE" id="PS00666">
    <property type="entry name" value="DHDPS_2"/>
    <property type="match status" value="1"/>
</dbReference>
<keyword id="KW-0028">Amino-acid biosynthesis</keyword>
<keyword id="KW-0963">Cytoplasm</keyword>
<keyword id="KW-0220">Diaminopimelate biosynthesis</keyword>
<keyword id="KW-0456">Lyase</keyword>
<keyword id="KW-0457">Lysine biosynthesis</keyword>
<keyword id="KW-1185">Reference proteome</keyword>
<keyword id="KW-0704">Schiff base</keyword>
<sequence length="290" mass="31609">MNFRNAHILTAMVTPFDDEGNYSSKRTKNLINYLLDNGTEGLLVSGTTGEAPTLSEDEKLQLIKDSVKFIDGRVPLMVGTGSNNTQQTIDYTNKVADIDGVDAALVVVPYYNKPNQKGMIAHFRKVADYSNLPIIIYNIPGRTGVTMEVDTIIELAQHDNIIGIKDCTGVENIAKIVENVPEDFLVYSGEDAEALSARVLGGQGIISVASHIYGDNMKTMYSSLESGDVSMAGKIMRDLIPKAEALFSYPSPSPVKAALNKIGYNVGGCRLPIVSLDKNEENELFKKLKI</sequence>
<comment type="function">
    <text evidence="1">Catalyzes the condensation of (S)-aspartate-beta-semialdehyde [(S)-ASA] and pyruvate to 4-hydroxy-tetrahydrodipicolinate (HTPA).</text>
</comment>
<comment type="catalytic activity">
    <reaction evidence="1">
        <text>L-aspartate 4-semialdehyde + pyruvate = (2S,4S)-4-hydroxy-2,3,4,5-tetrahydrodipicolinate + H2O + H(+)</text>
        <dbReference type="Rhea" id="RHEA:34171"/>
        <dbReference type="ChEBI" id="CHEBI:15361"/>
        <dbReference type="ChEBI" id="CHEBI:15377"/>
        <dbReference type="ChEBI" id="CHEBI:15378"/>
        <dbReference type="ChEBI" id="CHEBI:67139"/>
        <dbReference type="ChEBI" id="CHEBI:537519"/>
        <dbReference type="EC" id="4.3.3.7"/>
    </reaction>
</comment>
<comment type="pathway">
    <text evidence="1">Amino-acid biosynthesis; L-lysine biosynthesis via DAP pathway; (S)-tetrahydrodipicolinate from L-aspartate: step 3/4.</text>
</comment>
<comment type="subunit">
    <text evidence="1">Homotetramer; dimer of dimers.</text>
</comment>
<comment type="subcellular location">
    <subcellularLocation>
        <location evidence="1">Cytoplasm</location>
    </subcellularLocation>
</comment>
<comment type="similarity">
    <text evidence="1">Belongs to the DapA family.</text>
</comment>
<comment type="caution">
    <text evidence="2">Was originally thought to be a dihydrodipicolinate synthase (DHDPS), catalyzing the condensation of (S)-aspartate-beta-semialdehyde [(S)-ASA] and pyruvate to dihydrodipicolinate (DHDP). However, it was shown in E.coli that the product of the enzymatic reaction is not dihydrodipicolinate but in fact (4S)-4-hydroxy-2,3,4,5-tetrahydro-(2S)-dipicolinic acid (HTPA), and that the consecutive dehydration reaction leading to DHDP is not spontaneous but catalyzed by DapB.</text>
</comment>
<proteinExistence type="inferred from homology"/>
<accession>Q1WU86</accession>